<name>APAH_ECOLI</name>
<feature type="chain" id="PRO_0000197988" description="Bis(5'-nucleosyl)-tetraphosphatase [symmetrical]">
    <location>
        <begin position="1"/>
        <end position="280"/>
    </location>
</feature>
<feature type="sequence conflict" description="In Ref. 1; CAA28416." evidence="2" ref="1">
    <original>K</original>
    <variation>L</variation>
    <location>
        <position position="83"/>
    </location>
</feature>
<keyword id="KW-0378">Hydrolase</keyword>
<keyword id="KW-1185">Reference proteome</keyword>
<dbReference type="EC" id="3.6.1.41"/>
<dbReference type="EMBL" id="X04711">
    <property type="protein sequence ID" value="CAA28416.1"/>
    <property type="molecule type" value="Genomic_DNA"/>
</dbReference>
<dbReference type="EMBL" id="U00096">
    <property type="protein sequence ID" value="AAC73160.1"/>
    <property type="molecule type" value="Genomic_DNA"/>
</dbReference>
<dbReference type="EMBL" id="AP009048">
    <property type="protein sequence ID" value="BAB96617.2"/>
    <property type="molecule type" value="Genomic_DNA"/>
</dbReference>
<dbReference type="PIR" id="A64726">
    <property type="entry name" value="A64726"/>
</dbReference>
<dbReference type="RefSeq" id="NP_414591.1">
    <property type="nucleotide sequence ID" value="NC_000913.3"/>
</dbReference>
<dbReference type="RefSeq" id="WP_000257192.1">
    <property type="nucleotide sequence ID" value="NZ_STEB01000010.1"/>
</dbReference>
<dbReference type="SMR" id="P05637"/>
<dbReference type="BioGRID" id="4262205">
    <property type="interactions" value="14"/>
</dbReference>
<dbReference type="BioGRID" id="849172">
    <property type="interactions" value="3"/>
</dbReference>
<dbReference type="DIP" id="DIP-9113N"/>
<dbReference type="FunCoup" id="P05637">
    <property type="interactions" value="278"/>
</dbReference>
<dbReference type="IntAct" id="P05637">
    <property type="interactions" value="5"/>
</dbReference>
<dbReference type="STRING" id="511145.b0049"/>
<dbReference type="jPOST" id="P05637"/>
<dbReference type="PaxDb" id="511145-b0049"/>
<dbReference type="EnsemblBacteria" id="AAC73160">
    <property type="protein sequence ID" value="AAC73160"/>
    <property type="gene ID" value="b0049"/>
</dbReference>
<dbReference type="GeneID" id="93777386"/>
<dbReference type="GeneID" id="944770"/>
<dbReference type="KEGG" id="ecj:JW0048"/>
<dbReference type="KEGG" id="eco:b0049"/>
<dbReference type="KEGG" id="ecoc:C3026_00255"/>
<dbReference type="PATRIC" id="fig|1411691.4.peg.2234"/>
<dbReference type="EchoBASE" id="EB0046"/>
<dbReference type="eggNOG" id="COG0639">
    <property type="taxonomic scope" value="Bacteria"/>
</dbReference>
<dbReference type="HOGENOM" id="CLU_056184_2_0_6"/>
<dbReference type="InParanoid" id="P05637"/>
<dbReference type="OMA" id="INAFTRM"/>
<dbReference type="OrthoDB" id="9807890at2"/>
<dbReference type="PhylomeDB" id="P05637"/>
<dbReference type="BioCyc" id="EcoCyc:EG10048-MONOMER"/>
<dbReference type="BioCyc" id="MetaCyc:EG10048-MONOMER"/>
<dbReference type="PRO" id="PR:P05637"/>
<dbReference type="Proteomes" id="UP000000625">
    <property type="component" value="Chromosome"/>
</dbReference>
<dbReference type="GO" id="GO:0005737">
    <property type="term" value="C:cytoplasm"/>
    <property type="evidence" value="ECO:0000314"/>
    <property type="project" value="EcoCyc"/>
</dbReference>
<dbReference type="GO" id="GO:0008803">
    <property type="term" value="F:bis(5'-nucleosyl)-tetraphosphatase (symmetrical) activity"/>
    <property type="evidence" value="ECO:0000314"/>
    <property type="project" value="EcoCyc"/>
</dbReference>
<dbReference type="GO" id="GO:0008796">
    <property type="term" value="F:bis(5'-nucleosyl)-tetraphosphatase activity"/>
    <property type="evidence" value="ECO:0000315"/>
    <property type="project" value="EcoliWiki"/>
</dbReference>
<dbReference type="GO" id="GO:0016787">
    <property type="term" value="F:hydrolase activity"/>
    <property type="evidence" value="ECO:0000314"/>
    <property type="project" value="EcoCyc"/>
</dbReference>
<dbReference type="GO" id="GO:0016791">
    <property type="term" value="F:phosphatase activity"/>
    <property type="evidence" value="ECO:0000318"/>
    <property type="project" value="GO_Central"/>
</dbReference>
<dbReference type="GO" id="GO:0015949">
    <property type="term" value="P:nucleobase-containing small molecule interconversion"/>
    <property type="evidence" value="ECO:0000315"/>
    <property type="project" value="EcoCyc"/>
</dbReference>
<dbReference type="GO" id="GO:0010165">
    <property type="term" value="P:response to X-ray"/>
    <property type="evidence" value="ECO:0000315"/>
    <property type="project" value="EcoCyc"/>
</dbReference>
<dbReference type="GO" id="GO:0110154">
    <property type="term" value="P:RNA decapping"/>
    <property type="evidence" value="ECO:0000314"/>
    <property type="project" value="EcoCyc"/>
</dbReference>
<dbReference type="CDD" id="cd07422">
    <property type="entry name" value="MPP_ApaH"/>
    <property type="match status" value="1"/>
</dbReference>
<dbReference type="FunFam" id="3.60.21.10:FF:000013">
    <property type="entry name" value="Bis(5'-nucleosyl)-tetraphosphatase, symmetrical"/>
    <property type="match status" value="1"/>
</dbReference>
<dbReference type="Gene3D" id="3.60.21.10">
    <property type="match status" value="1"/>
</dbReference>
<dbReference type="HAMAP" id="MF_00199">
    <property type="entry name" value="ApaH"/>
    <property type="match status" value="1"/>
</dbReference>
<dbReference type="InterPro" id="IPR004617">
    <property type="entry name" value="ApaH"/>
</dbReference>
<dbReference type="InterPro" id="IPR004843">
    <property type="entry name" value="Calcineurin-like_PHP_ApaH"/>
</dbReference>
<dbReference type="InterPro" id="IPR029052">
    <property type="entry name" value="Metallo-depent_PP-like"/>
</dbReference>
<dbReference type="NCBIfam" id="TIGR00668">
    <property type="entry name" value="apaH"/>
    <property type="match status" value="1"/>
</dbReference>
<dbReference type="NCBIfam" id="NF001204">
    <property type="entry name" value="PRK00166.1"/>
    <property type="match status" value="1"/>
</dbReference>
<dbReference type="PANTHER" id="PTHR40942">
    <property type="match status" value="1"/>
</dbReference>
<dbReference type="PANTHER" id="PTHR40942:SF4">
    <property type="entry name" value="CYTOCHROME C5"/>
    <property type="match status" value="1"/>
</dbReference>
<dbReference type="Pfam" id="PF00149">
    <property type="entry name" value="Metallophos"/>
    <property type="match status" value="1"/>
</dbReference>
<dbReference type="PIRSF" id="PIRSF000903">
    <property type="entry name" value="B5n-ttraPtase_sm"/>
    <property type="match status" value="1"/>
</dbReference>
<dbReference type="SUPFAM" id="SSF56300">
    <property type="entry name" value="Metallo-dependent phosphatases"/>
    <property type="match status" value="1"/>
</dbReference>
<reference key="1">
    <citation type="journal article" date="1986" name="Mol. Gen. Genet.">
        <title>The gene for Escherichia coli diadenosine tetraphosphatase is located immediately clockwise to folA and forms an operon with ksgA.</title>
        <authorList>
            <person name="Blanchin-Roland S."/>
            <person name="Blanquet S."/>
            <person name="Schmitter J.-M."/>
            <person name="Fayat G."/>
        </authorList>
    </citation>
    <scope>NUCLEOTIDE SEQUENCE [GENOMIC DNA]</scope>
</reference>
<reference key="2">
    <citation type="journal article" date="1992" name="Nucleic Acids Res.">
        <title>Systematic sequencing of the Escherichia coli genome: analysis of the 0-2.4 min region.</title>
        <authorList>
            <person name="Yura T."/>
            <person name="Mori H."/>
            <person name="Nagai H."/>
            <person name="Nagata T."/>
            <person name="Ishihama A."/>
            <person name="Fujita N."/>
            <person name="Isono K."/>
            <person name="Mizobuchi K."/>
            <person name="Nakata A."/>
        </authorList>
    </citation>
    <scope>NUCLEOTIDE SEQUENCE [LARGE SCALE GENOMIC DNA]</scope>
    <source>
        <strain>K12</strain>
    </source>
</reference>
<reference key="3">
    <citation type="journal article" date="1997" name="Science">
        <title>The complete genome sequence of Escherichia coli K-12.</title>
        <authorList>
            <person name="Blattner F.R."/>
            <person name="Plunkett G. III"/>
            <person name="Bloch C.A."/>
            <person name="Perna N.T."/>
            <person name="Burland V."/>
            <person name="Riley M."/>
            <person name="Collado-Vides J."/>
            <person name="Glasner J.D."/>
            <person name="Rode C.K."/>
            <person name="Mayhew G.F."/>
            <person name="Gregor J."/>
            <person name="Davis N.W."/>
            <person name="Kirkpatrick H.A."/>
            <person name="Goeden M.A."/>
            <person name="Rose D.J."/>
            <person name="Mau B."/>
            <person name="Shao Y."/>
        </authorList>
    </citation>
    <scope>NUCLEOTIDE SEQUENCE [LARGE SCALE GENOMIC DNA]</scope>
    <source>
        <strain>K12 / MG1655 / ATCC 47076</strain>
    </source>
</reference>
<reference key="4">
    <citation type="journal article" date="2006" name="Mol. Syst. Biol.">
        <title>Highly accurate genome sequences of Escherichia coli K-12 strains MG1655 and W3110.</title>
        <authorList>
            <person name="Hayashi K."/>
            <person name="Morooka N."/>
            <person name="Yamamoto Y."/>
            <person name="Fujita K."/>
            <person name="Isono K."/>
            <person name="Choi S."/>
            <person name="Ohtsubo E."/>
            <person name="Baba T."/>
            <person name="Wanner B.L."/>
            <person name="Mori H."/>
            <person name="Horiuchi T."/>
        </authorList>
    </citation>
    <scope>NUCLEOTIDE SEQUENCE [LARGE SCALE GENOMIC DNA]</scope>
    <scope>SEQUENCE REVISION TO 83 AND 275</scope>
    <source>
        <strain>K12 / W3110 / ATCC 27325 / DSM 5911</strain>
    </source>
</reference>
<reference key="5">
    <citation type="journal article" date="1983" name="J. Biol. Chem.">
        <title>Catabolism of diadenosine 5',5''-P1,P4-tetraphosphate in procaryotes. Purification and properties of diadenosine 5',5''-P1,P4-tetraphosphate (symmetrical) pyrophosphohydrolase from Escherichia coli K12.</title>
        <authorList>
            <person name="Guranowski A."/>
            <person name="Jakubowski H."/>
            <person name="Holler E."/>
        </authorList>
    </citation>
    <scope>FUNCTION</scope>
    <scope>CATALYTIC ACTIVITY</scope>
    <scope>ACTIVITY REGULATION</scope>
    <scope>SUBUNIT</scope>
    <source>
        <strain>K12</strain>
    </source>
</reference>
<reference key="6">
    <citation type="journal article" date="1997" name="Electrophoresis">
        <title>Escherichia coli proteome analysis using the gene-protein database.</title>
        <authorList>
            <person name="VanBogelen R.A."/>
            <person name="Abshire K.Z."/>
            <person name="Moldover B."/>
            <person name="Olson E.R."/>
            <person name="Neidhardt F.C."/>
        </authorList>
    </citation>
    <scope>IDENTIFICATION BY 2D-GEL</scope>
</reference>
<protein>
    <recommendedName>
        <fullName>Bis(5'-nucleosyl)-tetraphosphatase [symmetrical]</fullName>
        <ecNumber>3.6.1.41</ecNumber>
    </recommendedName>
    <alternativeName>
        <fullName>Ap4A hydrolase</fullName>
    </alternativeName>
    <alternativeName>
        <fullName>Diadenosine 5',5'''-P1,P4-tetraphosphate pyrophosphohydrolase</fullName>
    </alternativeName>
    <alternativeName>
        <fullName>Diadenosine tetraphosphatase</fullName>
    </alternativeName>
</protein>
<accession>P05637</accession>
<accession>P78039</accession>
<evidence type="ECO:0000269" key="1">
    <source>
    </source>
</evidence>
<evidence type="ECO:0000305" key="2"/>
<proteinExistence type="evidence at protein level"/>
<organism>
    <name type="scientific">Escherichia coli (strain K12)</name>
    <dbReference type="NCBI Taxonomy" id="83333"/>
    <lineage>
        <taxon>Bacteria</taxon>
        <taxon>Pseudomonadati</taxon>
        <taxon>Pseudomonadota</taxon>
        <taxon>Gammaproteobacteria</taxon>
        <taxon>Enterobacterales</taxon>
        <taxon>Enterobacteriaceae</taxon>
        <taxon>Escherichia</taxon>
    </lineage>
</organism>
<gene>
    <name type="primary">apaH</name>
    <name type="ordered locus">b0049</name>
    <name type="ordered locus">JW0048</name>
</gene>
<comment type="function">
    <text evidence="1">Hydrolyzes diadenosine 5',5'''-P1,P4-tetraphosphate to yield ADP.</text>
</comment>
<comment type="catalytic activity">
    <reaction evidence="1">
        <text>P(1),P(4)-bis(5'-adenosyl) tetraphosphate + H2O = 2 ADP + 2 H(+)</text>
        <dbReference type="Rhea" id="RHEA:24252"/>
        <dbReference type="ChEBI" id="CHEBI:15377"/>
        <dbReference type="ChEBI" id="CHEBI:15378"/>
        <dbReference type="ChEBI" id="CHEBI:58141"/>
        <dbReference type="ChEBI" id="CHEBI:456216"/>
        <dbReference type="EC" id="3.6.1.41"/>
    </reaction>
</comment>
<comment type="activity regulation">
    <text evidence="1">Co(2+) is a strong stimulator (100-fold increase in rate of hydrolysis). Mn(2+), Cd(2+), Ni(2+), Mg(2+) and Ca(2+) are weak stimulators; the two latter act synergistically with Co(2+).</text>
</comment>
<comment type="subunit">
    <text evidence="1">Monomer.</text>
</comment>
<comment type="similarity">
    <text evidence="2">Belongs to the Ap4A hydrolase family.</text>
</comment>
<sequence length="280" mass="31297">MATYLIGDVHGCYDELIALLHKVEFTPGKDTLWLTGDLVARGPGSLDVLRYVKSLGDSVRLVLGNHDLHLLAVFAGISRNKPKDRLTPLLEAPDADELLNWLRRQPLLQIDEEKKLVMAHAGITPQWDLQTAKECARDVEAVLSSDSYPFFLDAMYGDMPNNWSPELRGLGRLRFITNAFTRMRFCFPNGQLDMYSKESPEEAPAPLKPWFAIPGPVAEEYSIAFGHWASLEGKGTPEGIYALDTGCCWGGTLTCLRWEDKQYFVQPSNRHKDLGEAAAS</sequence>